<gene>
    <name evidence="1" type="primary">tsf</name>
    <name type="ordered locus">Bcav_2506</name>
</gene>
<comment type="function">
    <text evidence="1">Associates with the EF-Tu.GDP complex and induces the exchange of GDP to GTP. It remains bound to the aminoacyl-tRNA.EF-Tu.GTP complex up to the GTP hydrolysis stage on the ribosome.</text>
</comment>
<comment type="subcellular location">
    <subcellularLocation>
        <location evidence="1">Cytoplasm</location>
    </subcellularLocation>
</comment>
<comment type="similarity">
    <text evidence="1">Belongs to the EF-Ts family.</text>
</comment>
<proteinExistence type="inferred from homology"/>
<accession>C5BWU0</accession>
<sequence>MANYTAADIKTLREKSGAGMLDVKKALDEADGDAEKALEIIRVKGLKGVAKREGRSASEGLVAVKVTDAHDVAGQVGTMVELNAETDFVAKNATFVGLAERVLDAAVASAARDADALLAADAGGETVAEIVDGAAATLGEKLVLRRVARLDGEHVGVYLHRTSKDLPPQVGVMVATDAAAASVAEEIAMHVAAYSPAYLTREDVPEQLVADERRIAEETARNEGKPEQALTKIVEGRLNGFFKDQVLVDQAFARDPKKTVGQVVAETGGTLTGFARFRVGA</sequence>
<evidence type="ECO:0000255" key="1">
    <source>
        <dbReference type="HAMAP-Rule" id="MF_00050"/>
    </source>
</evidence>
<keyword id="KW-0963">Cytoplasm</keyword>
<keyword id="KW-0251">Elongation factor</keyword>
<keyword id="KW-0648">Protein biosynthesis</keyword>
<keyword id="KW-1185">Reference proteome</keyword>
<reference key="1">
    <citation type="journal article" date="2009" name="Stand. Genomic Sci.">
        <title>Complete genome sequence of Beutenbergia cavernae type strain (HKI 0122).</title>
        <authorList>
            <person name="Land M."/>
            <person name="Pukall R."/>
            <person name="Abt B."/>
            <person name="Goker M."/>
            <person name="Rohde M."/>
            <person name="Glavina Del Rio T."/>
            <person name="Tice H."/>
            <person name="Copeland A."/>
            <person name="Cheng J.F."/>
            <person name="Lucas S."/>
            <person name="Chen F."/>
            <person name="Nolan M."/>
            <person name="Bruce D."/>
            <person name="Goodwin L."/>
            <person name="Pitluck S."/>
            <person name="Ivanova N."/>
            <person name="Mavromatis K."/>
            <person name="Ovchinnikova G."/>
            <person name="Pati A."/>
            <person name="Chen A."/>
            <person name="Palaniappan K."/>
            <person name="Hauser L."/>
            <person name="Chang Y.J."/>
            <person name="Jefferies C.C."/>
            <person name="Saunders E."/>
            <person name="Brettin T."/>
            <person name="Detter J.C."/>
            <person name="Han C."/>
            <person name="Chain P."/>
            <person name="Bristow J."/>
            <person name="Eisen J.A."/>
            <person name="Markowitz V."/>
            <person name="Hugenholtz P."/>
            <person name="Kyrpides N.C."/>
            <person name="Klenk H.P."/>
            <person name="Lapidus A."/>
        </authorList>
    </citation>
    <scope>NUCLEOTIDE SEQUENCE [LARGE SCALE GENOMIC DNA]</scope>
    <source>
        <strain>ATCC BAA-8 / DSM 12333 / CCUG 43141 / JCM 11478 / NBRC 16432 / NCIMB 13614 / HKI 0122</strain>
    </source>
</reference>
<protein>
    <recommendedName>
        <fullName evidence="1">Elongation factor Ts</fullName>
        <shortName evidence="1">EF-Ts</shortName>
    </recommendedName>
</protein>
<organism>
    <name type="scientific">Beutenbergia cavernae (strain ATCC BAA-8 / DSM 12333 / CCUG 43141 / JCM 11478 / NBRC 16432 / NCIMB 13614 / HKI 0122)</name>
    <dbReference type="NCBI Taxonomy" id="471853"/>
    <lineage>
        <taxon>Bacteria</taxon>
        <taxon>Bacillati</taxon>
        <taxon>Actinomycetota</taxon>
        <taxon>Actinomycetes</taxon>
        <taxon>Micrococcales</taxon>
        <taxon>Beutenbergiaceae</taxon>
        <taxon>Beutenbergia</taxon>
    </lineage>
</organism>
<dbReference type="EMBL" id="CP001618">
    <property type="protein sequence ID" value="ACQ80756.1"/>
    <property type="molecule type" value="Genomic_DNA"/>
</dbReference>
<dbReference type="RefSeq" id="WP_015882996.1">
    <property type="nucleotide sequence ID" value="NC_012669.1"/>
</dbReference>
<dbReference type="SMR" id="C5BWU0"/>
<dbReference type="STRING" id="471853.Bcav_2506"/>
<dbReference type="KEGG" id="bcv:Bcav_2506"/>
<dbReference type="eggNOG" id="COG0264">
    <property type="taxonomic scope" value="Bacteria"/>
</dbReference>
<dbReference type="HOGENOM" id="CLU_047155_0_0_11"/>
<dbReference type="OrthoDB" id="9808348at2"/>
<dbReference type="Proteomes" id="UP000007962">
    <property type="component" value="Chromosome"/>
</dbReference>
<dbReference type="GO" id="GO:0005737">
    <property type="term" value="C:cytoplasm"/>
    <property type="evidence" value="ECO:0007669"/>
    <property type="project" value="UniProtKB-SubCell"/>
</dbReference>
<dbReference type="GO" id="GO:0003746">
    <property type="term" value="F:translation elongation factor activity"/>
    <property type="evidence" value="ECO:0007669"/>
    <property type="project" value="UniProtKB-UniRule"/>
</dbReference>
<dbReference type="CDD" id="cd14275">
    <property type="entry name" value="UBA_EF-Ts"/>
    <property type="match status" value="1"/>
</dbReference>
<dbReference type="FunFam" id="1.10.286.20:FF:000001">
    <property type="entry name" value="Elongation factor Ts"/>
    <property type="match status" value="1"/>
</dbReference>
<dbReference type="FunFam" id="1.10.8.10:FF:000001">
    <property type="entry name" value="Elongation factor Ts"/>
    <property type="match status" value="1"/>
</dbReference>
<dbReference type="Gene3D" id="1.10.286.20">
    <property type="match status" value="1"/>
</dbReference>
<dbReference type="Gene3D" id="1.10.8.10">
    <property type="entry name" value="DNA helicase RuvA subunit, C-terminal domain"/>
    <property type="match status" value="1"/>
</dbReference>
<dbReference type="Gene3D" id="3.30.479.20">
    <property type="entry name" value="Elongation factor Ts, dimerisation domain"/>
    <property type="match status" value="2"/>
</dbReference>
<dbReference type="HAMAP" id="MF_00050">
    <property type="entry name" value="EF_Ts"/>
    <property type="match status" value="1"/>
</dbReference>
<dbReference type="InterPro" id="IPR036402">
    <property type="entry name" value="EF-Ts_dimer_sf"/>
</dbReference>
<dbReference type="InterPro" id="IPR001816">
    <property type="entry name" value="Transl_elong_EFTs/EF1B"/>
</dbReference>
<dbReference type="InterPro" id="IPR014039">
    <property type="entry name" value="Transl_elong_EFTs/EF1B_dimer"/>
</dbReference>
<dbReference type="InterPro" id="IPR018101">
    <property type="entry name" value="Transl_elong_Ts_CS"/>
</dbReference>
<dbReference type="InterPro" id="IPR009060">
    <property type="entry name" value="UBA-like_sf"/>
</dbReference>
<dbReference type="NCBIfam" id="TIGR00116">
    <property type="entry name" value="tsf"/>
    <property type="match status" value="1"/>
</dbReference>
<dbReference type="PANTHER" id="PTHR11741">
    <property type="entry name" value="ELONGATION FACTOR TS"/>
    <property type="match status" value="1"/>
</dbReference>
<dbReference type="PANTHER" id="PTHR11741:SF0">
    <property type="entry name" value="ELONGATION FACTOR TS, MITOCHONDRIAL"/>
    <property type="match status" value="1"/>
</dbReference>
<dbReference type="Pfam" id="PF00889">
    <property type="entry name" value="EF_TS"/>
    <property type="match status" value="1"/>
</dbReference>
<dbReference type="SUPFAM" id="SSF54713">
    <property type="entry name" value="Elongation factor Ts (EF-Ts), dimerisation domain"/>
    <property type="match status" value="1"/>
</dbReference>
<dbReference type="SUPFAM" id="SSF46934">
    <property type="entry name" value="UBA-like"/>
    <property type="match status" value="1"/>
</dbReference>
<dbReference type="PROSITE" id="PS01126">
    <property type="entry name" value="EF_TS_1"/>
    <property type="match status" value="1"/>
</dbReference>
<dbReference type="PROSITE" id="PS01127">
    <property type="entry name" value="EF_TS_2"/>
    <property type="match status" value="1"/>
</dbReference>
<feature type="chain" id="PRO_1000202232" description="Elongation factor Ts">
    <location>
        <begin position="1"/>
        <end position="281"/>
    </location>
</feature>
<feature type="region of interest" description="Involved in Mg(2+) ion dislocation from EF-Tu" evidence="1">
    <location>
        <begin position="86"/>
        <end position="89"/>
    </location>
</feature>
<name>EFTS_BEUC1</name>